<name>ISCU2_ARCFU</name>
<evidence type="ECO:0000269" key="1">
    <source>
    </source>
</evidence>
<evidence type="ECO:0000269" key="2">
    <source>
    </source>
</evidence>
<evidence type="ECO:0000305" key="3"/>
<evidence type="ECO:0007744" key="4">
    <source>
        <dbReference type="PDB" id="4EB5"/>
    </source>
</evidence>
<evidence type="ECO:0007829" key="5">
    <source>
        <dbReference type="PDB" id="4EB5"/>
    </source>
</evidence>
<organism>
    <name type="scientific">Archaeoglobus fulgidus (strain ATCC 49558 / DSM 4304 / JCM 9628 / NBRC 100126 / VC-16)</name>
    <dbReference type="NCBI Taxonomy" id="224325"/>
    <lineage>
        <taxon>Archaea</taxon>
        <taxon>Methanobacteriati</taxon>
        <taxon>Methanobacteriota</taxon>
        <taxon>Archaeoglobi</taxon>
        <taxon>Archaeoglobales</taxon>
        <taxon>Archaeoglobaceae</taxon>
        <taxon>Archaeoglobus</taxon>
    </lineage>
</organism>
<sequence length="153" mass="16920">MYSDKVFDHFQNPRNVGKIEDADGVGTVGNPVCGDLMTIYIKVKDNRIEDIKFQTFGCAAAIATSSMATEMAKGKTIEEALKITRDAVAEALGGLPKQKMHCSNLAADALRRAIVDYFRKNGKIDKIKELGLEKELEKMEKGEMDDHGEYCEA</sequence>
<reference key="1">
    <citation type="journal article" date="1997" name="Nature">
        <title>The complete genome sequence of the hyperthermophilic, sulphate-reducing archaeon Archaeoglobus fulgidus.</title>
        <authorList>
            <person name="Klenk H.-P."/>
            <person name="Clayton R.A."/>
            <person name="Tomb J.-F."/>
            <person name="White O."/>
            <person name="Nelson K.E."/>
            <person name="Ketchum K.A."/>
            <person name="Dodson R.J."/>
            <person name="Gwinn M.L."/>
            <person name="Hickey E.K."/>
            <person name="Peterson J.D."/>
            <person name="Richardson D.L."/>
            <person name="Kerlavage A.R."/>
            <person name="Graham D.E."/>
            <person name="Kyrpides N.C."/>
            <person name="Fleischmann R.D."/>
            <person name="Quackenbush J."/>
            <person name="Lee N.H."/>
            <person name="Sutton G.G."/>
            <person name="Gill S.R."/>
            <person name="Kirkness E.F."/>
            <person name="Dougherty B.A."/>
            <person name="McKenney K."/>
            <person name="Adams M.D."/>
            <person name="Loftus B.J."/>
            <person name="Peterson S.N."/>
            <person name="Reich C.I."/>
            <person name="McNeil L.K."/>
            <person name="Badger J.H."/>
            <person name="Glodek A."/>
            <person name="Zhou L."/>
            <person name="Overbeek R."/>
            <person name="Gocayne J.D."/>
            <person name="Weidman J.F."/>
            <person name="McDonald L.A."/>
            <person name="Utterback T.R."/>
            <person name="Cotton M.D."/>
            <person name="Spriggs T."/>
            <person name="Artiach P."/>
            <person name="Kaine B.P."/>
            <person name="Sykes S.M."/>
            <person name="Sadow P.W."/>
            <person name="D'Andrea K.P."/>
            <person name="Bowman C."/>
            <person name="Fujii C."/>
            <person name="Garland S.A."/>
            <person name="Mason T.M."/>
            <person name="Olsen G.J."/>
            <person name="Fraser C.M."/>
            <person name="Smith H.O."/>
            <person name="Woese C.R."/>
            <person name="Venter J.C."/>
        </authorList>
    </citation>
    <scope>NUCLEOTIDE SEQUENCE [LARGE SCALE GENOMIC DNA]</scope>
    <source>
        <strain>ATCC 49558 / DSM 4304 / JCM 9628 / NBRC 100126 / VC-16</strain>
    </source>
</reference>
<reference key="2">
    <citation type="journal article" date="2012" name="Angew. Chem. Int. Ed.">
        <title>(IscS-IscU)2 complex structures provide insights into Fe2S2 biogenesis and transfer.</title>
        <authorList>
            <person name="Marinoni E.N."/>
            <person name="de Oliveira J.S."/>
            <person name="Nicolet Y."/>
            <person name="Raulfs E.C."/>
            <person name="Amara P."/>
            <person name="Dean D.R."/>
            <person name="Fontecilla-Camps J.C."/>
        </authorList>
    </citation>
    <scope>X-RAY CRYSTALLOGRAPHY (2.53 ANGSTROMS) IN COMPLEX WITH IRON-SULFUR (2FE-2S) UNDER REDUCING AND OXIDIZING CONDITIONS</scope>
    <scope>FUNCTION</scope>
    <scope>SUBUNIT</scope>
    <scope>MUTAGENESIS OF ASP-35</scope>
    <source>
        <strain>ATCC 49558 / DSM 4304 / JCM 9628 / NBRC 100126 / VC-16</strain>
    </source>
</reference>
<reference key="3">
    <citation type="journal article" date="2013" name="Dalton Trans.">
        <title>Crystal structure and functional studies of an unusual L-cysteine desulfurase from Archaeoglobus fulgidus.</title>
        <authorList>
            <person name="Yamanaka Y."/>
            <person name="Zeppieri L."/>
            <person name="Nicolet Y."/>
            <person name="Marinoni E.N."/>
            <person name="de Oliveira J.S."/>
            <person name="Odaka M."/>
            <person name="Dean D.R."/>
            <person name="Fontecilla-Camps J.C."/>
        </authorList>
    </citation>
    <scope>FUNCTION</scope>
    <scope>MUTAGENESIS OF ASP-35</scope>
    <source>
        <strain>ATCC 49558 / DSM 4304 / JCM 9628 / NBRC 100126 / VC-16</strain>
    </source>
</reference>
<keyword id="KW-0001">2Fe-2S</keyword>
<keyword id="KW-0002">3D-structure</keyword>
<keyword id="KW-0408">Iron</keyword>
<keyword id="KW-0411">Iron-sulfur</keyword>
<keyword id="KW-0479">Metal-binding</keyword>
<keyword id="KW-1185">Reference proteome</keyword>
<gene>
    <name type="primary">iscU2</name>
    <name type="ordered locus">AF_0565</name>
</gene>
<proteinExistence type="evidence at protein level"/>
<dbReference type="EMBL" id="AE000782">
    <property type="protein sequence ID" value="AAB91040.1"/>
    <property type="molecule type" value="Genomic_DNA"/>
</dbReference>
<dbReference type="PIR" id="A69273">
    <property type="entry name" value="A69273"/>
</dbReference>
<dbReference type="PDB" id="4EB5">
    <property type="method" value="X-ray"/>
    <property type="resolution" value="2.53 A"/>
    <property type="chains" value="C/D=1-153"/>
</dbReference>
<dbReference type="PDB" id="4EB7">
    <property type="method" value="X-ray"/>
    <property type="resolution" value="2.75 A"/>
    <property type="chains" value="C=1-153"/>
</dbReference>
<dbReference type="PDBsum" id="4EB5"/>
<dbReference type="PDBsum" id="4EB7"/>
<dbReference type="SMR" id="P0DMG2"/>
<dbReference type="EnsemblBacteria" id="AAB91040">
    <property type="protein sequence ID" value="AAB91040"/>
    <property type="gene ID" value="AF_0185"/>
</dbReference>
<dbReference type="KEGG" id="afu:AF_0185"/>
<dbReference type="HOGENOM" id="CLU_079283_5_1_2"/>
<dbReference type="OrthoDB" id="319865at2157"/>
<dbReference type="PhylomeDB" id="P0DMG2"/>
<dbReference type="EvolutionaryTrace" id="P0DMG2"/>
<dbReference type="Proteomes" id="UP000002199">
    <property type="component" value="Chromosome"/>
</dbReference>
<dbReference type="GO" id="GO:0051537">
    <property type="term" value="F:2 iron, 2 sulfur cluster binding"/>
    <property type="evidence" value="ECO:0007669"/>
    <property type="project" value="UniProtKB-KW"/>
</dbReference>
<dbReference type="GO" id="GO:0005506">
    <property type="term" value="F:iron ion binding"/>
    <property type="evidence" value="ECO:0007669"/>
    <property type="project" value="InterPro"/>
</dbReference>
<dbReference type="GO" id="GO:0016226">
    <property type="term" value="P:iron-sulfur cluster assembly"/>
    <property type="evidence" value="ECO:0007669"/>
    <property type="project" value="InterPro"/>
</dbReference>
<dbReference type="CDD" id="cd06664">
    <property type="entry name" value="IscU_like"/>
    <property type="match status" value="1"/>
</dbReference>
<dbReference type="Gene3D" id="3.90.1010.10">
    <property type="match status" value="1"/>
</dbReference>
<dbReference type="InterPro" id="IPR017787">
    <property type="entry name" value="NIF_FeS_clus_asmbl_NifU-like"/>
</dbReference>
<dbReference type="InterPro" id="IPR002871">
    <property type="entry name" value="NIF_FeS_clus_asmbl_NifU_N"/>
</dbReference>
<dbReference type="NCBIfam" id="TIGR03419">
    <property type="entry name" value="NifU_clost"/>
    <property type="match status" value="1"/>
</dbReference>
<dbReference type="PANTHER" id="PTHR10093">
    <property type="entry name" value="IRON-SULFUR CLUSTER ASSEMBLY ENZYME NIFU HOMOLOG"/>
    <property type="match status" value="1"/>
</dbReference>
<dbReference type="Pfam" id="PF01592">
    <property type="entry name" value="NifU_N"/>
    <property type="match status" value="1"/>
</dbReference>
<dbReference type="SUPFAM" id="SSF82649">
    <property type="entry name" value="SufE/NifU"/>
    <property type="match status" value="1"/>
</dbReference>
<feature type="chain" id="PRO_0000428755" description="Iron-sulfur cluster assembly scaffold protein IscU 2">
    <location>
        <begin position="1"/>
        <end position="153"/>
    </location>
</feature>
<feature type="binding site" evidence="4">
    <location>
        <position position="33"/>
    </location>
    <ligand>
        <name>[2Fe-2S] cluster</name>
        <dbReference type="ChEBI" id="CHEBI:190135"/>
        <note>ligand shared with IscS</note>
    </ligand>
</feature>
<feature type="binding site" evidence="4">
    <location>
        <position position="58"/>
    </location>
    <ligand>
        <name>[2Fe-2S] cluster</name>
        <dbReference type="ChEBI" id="CHEBI:190135"/>
        <note>ligand shared with IscS</note>
    </ligand>
</feature>
<feature type="binding site" evidence="4">
    <location>
        <position position="101"/>
    </location>
    <ligand>
        <name>[2Fe-2S] cluster</name>
        <dbReference type="ChEBI" id="CHEBI:190135"/>
        <note>ligand shared with IscS</note>
    </ligand>
</feature>
<feature type="binding site" evidence="4">
    <location>
        <position position="102"/>
    </location>
    <ligand>
        <name>[2Fe-2S] cluster</name>
        <dbReference type="ChEBI" id="CHEBI:190135"/>
        <note>ligand shared with IscS</note>
    </ligand>
</feature>
<feature type="mutagenesis site" description="Generates an iron-sulfur cluster containing IscS-IscU complex that does not dissociate." evidence="1 2">
    <original>D</original>
    <variation>A</variation>
    <location>
        <position position="35"/>
    </location>
</feature>
<feature type="helix" evidence="5">
    <location>
        <begin position="4"/>
        <end position="11"/>
    </location>
</feature>
<feature type="strand" evidence="5">
    <location>
        <begin position="14"/>
        <end position="17"/>
    </location>
</feature>
<feature type="strand" evidence="5">
    <location>
        <begin position="23"/>
        <end position="29"/>
    </location>
</feature>
<feature type="turn" evidence="5">
    <location>
        <begin position="31"/>
        <end position="33"/>
    </location>
</feature>
<feature type="strand" evidence="5">
    <location>
        <begin position="36"/>
        <end position="57"/>
    </location>
</feature>
<feature type="helix" evidence="5">
    <location>
        <begin position="59"/>
        <end position="72"/>
    </location>
</feature>
<feature type="helix" evidence="5">
    <location>
        <begin position="77"/>
        <end position="80"/>
    </location>
</feature>
<feature type="helix" evidence="5">
    <location>
        <begin position="85"/>
        <end position="92"/>
    </location>
</feature>
<feature type="helix" evidence="5">
    <location>
        <begin position="100"/>
        <end position="120"/>
    </location>
</feature>
<feature type="helix" evidence="5">
    <location>
        <begin position="124"/>
        <end position="129"/>
    </location>
</feature>
<feature type="helix" evidence="5">
    <location>
        <begin position="133"/>
        <end position="137"/>
    </location>
</feature>
<accession>P0DMG2</accession>
<accession>O34393</accession>
<comment type="function">
    <text evidence="1 2">A scaffold on which IscS assembles Fe-S clusters. Subsequently gives the nascent cluster to other proteins. Binds 1 2Fe-2S cluster per subunit in a crystal formed under reducing conditions; this subunit provides 3 ligands while IscS2 provides the other ligand. It is likely that Fe-S cluster coordination is flexible as the role of this complex is to build and then hand off Fe-S clusters.</text>
</comment>
<comment type="subunit">
    <text evidence="1">Forms a heterotetramer with IscS2.</text>
</comment>
<comment type="similarity">
    <text evidence="3">Belongs to the NifU family.</text>
</comment>
<protein>
    <recommendedName>
        <fullName>Iron-sulfur cluster assembly scaffold protein IscU 2</fullName>
    </recommendedName>
    <alternativeName>
        <fullName>Sulfur acceptor protein IscU 2</fullName>
    </alternativeName>
</protein>